<sequence length="640" mass="70206">MPLSFERFQGEGVFGLSSSSFYSDSQKIWSNQDKTEAKQEDLGYVVGGFLPEPTSVLDALRSPSPLASYSSTTTTLSSSHGGGGTTVTNTTVTAGDDNNNNKCSQMGLDDLDGVLSASSPGQEQSILRLIMDPGSAFGVFDPGFGFGSGSGPVSAPVSDNSNLLCNFPFQEITNPAEALINPSNHCLFYNPPLSPPAKRFNSGSLHQPVFPLSDPDPGHDPVRRQHQFQFPFYHNNQQQQFPSSSSSTAVAMVPVPSPGMAGDDQSVIIEQLFNAAELIGTTGNNNGDHTVLAQGILARLNHHLNTSSNHKSPFQRAASHIAEALLSLIHNESSPPLITPENLILRIAAYRSFSETSPFLQFVNFTANQSILESCNESGFDRIHIIDFDVGYGGQWSSLMQELASGVGGRRRNRASSLKLTVFAPPPSTVSDEFELRFTEENLKTFAGEVKIPFEIELLSVELLLNPAYWPLSLRSSEKEAIAVNLPVNSVASGYLPLILRFLKQLSPNIVVCSDRGCDRNDAPFPNAVIHSLQYHTSLLESLDANQNQDDSSIERFWVQPSIEKLLMKRHRWIERSPPWRILFTQCGFSPASLSQMAEAQAECLLQRNPVRGFHVEKRQSSLVMCWQRKELVTVSAWKC</sequence>
<comment type="function">
    <text evidence="1">Probable transcription factor involved in plant development.</text>
</comment>
<comment type="subcellular location">
    <subcellularLocation>
        <location evidence="4">Nucleus</location>
    </subcellularLocation>
</comment>
<comment type="tissue specificity">
    <text evidence="4">Expressed in seedlings, roots, cotyledons, leaves and flowers.</text>
</comment>
<comment type="similarity">
    <text evidence="5">Belongs to the GRAS family.</text>
</comment>
<keyword id="KW-0539">Nucleus</keyword>
<keyword id="KW-1185">Reference proteome</keyword>
<keyword id="KW-0804">Transcription</keyword>
<keyword id="KW-0805">Transcription regulation</keyword>
<name>SCL27_ARATH</name>
<accession>Q7XJM8</accession>
<accession>Q84WB1</accession>
<dbReference type="EMBL" id="CP002685">
    <property type="protein sequence ID" value="AEC10518.1"/>
    <property type="molecule type" value="Genomic_DNA"/>
</dbReference>
<dbReference type="EMBL" id="BT004053">
    <property type="protein sequence ID" value="AAO42084.1"/>
    <property type="molecule type" value="mRNA"/>
</dbReference>
<dbReference type="EMBL" id="BT020591">
    <property type="protein sequence ID" value="AAW80864.1"/>
    <property type="molecule type" value="mRNA"/>
</dbReference>
<dbReference type="PIR" id="B84887">
    <property type="entry name" value="B84887"/>
</dbReference>
<dbReference type="SMR" id="Q7XJM8"/>
<dbReference type="BioGRID" id="4460">
    <property type="interactions" value="4"/>
</dbReference>
<dbReference type="FunCoup" id="Q7XJM8">
    <property type="interactions" value="19"/>
</dbReference>
<dbReference type="IntAct" id="Q7XJM8">
    <property type="interactions" value="3"/>
</dbReference>
<dbReference type="STRING" id="3702.Q7XJM8"/>
<dbReference type="PaxDb" id="3702-AT2G45160.1"/>
<dbReference type="ProteomicsDB" id="232807"/>
<dbReference type="EnsemblPlants" id="AT2G45160.1">
    <property type="protein sequence ID" value="AT2G45160.1"/>
    <property type="gene ID" value="AT2G45160"/>
</dbReference>
<dbReference type="GeneID" id="819124"/>
<dbReference type="Gramene" id="AT2G45160.1">
    <property type="protein sequence ID" value="AT2G45160.1"/>
    <property type="gene ID" value="AT2G45160"/>
</dbReference>
<dbReference type="KEGG" id="ath:AT2G45160"/>
<dbReference type="Araport" id="AT2G45160"/>
<dbReference type="TAIR" id="AT2G45160">
    <property type="gene designation" value="HAM1"/>
</dbReference>
<dbReference type="eggNOG" id="ENOG502QQQC">
    <property type="taxonomic scope" value="Eukaryota"/>
</dbReference>
<dbReference type="HOGENOM" id="CLU_013139_1_0_1"/>
<dbReference type="InParanoid" id="Q7XJM8"/>
<dbReference type="OMA" id="CNESGFD"/>
<dbReference type="OrthoDB" id="666726at2759"/>
<dbReference type="PhylomeDB" id="Q7XJM8"/>
<dbReference type="PRO" id="PR:Q7XJM8"/>
<dbReference type="Proteomes" id="UP000006548">
    <property type="component" value="Chromosome 2"/>
</dbReference>
<dbReference type="ExpressionAtlas" id="Q7XJM8">
    <property type="expression patterns" value="baseline and differential"/>
</dbReference>
<dbReference type="GO" id="GO:0005634">
    <property type="term" value="C:nucleus"/>
    <property type="evidence" value="ECO:0007669"/>
    <property type="project" value="UniProtKB-SubCell"/>
</dbReference>
<dbReference type="GO" id="GO:0003700">
    <property type="term" value="F:DNA-binding transcription factor activity"/>
    <property type="evidence" value="ECO:0000250"/>
    <property type="project" value="TAIR"/>
</dbReference>
<dbReference type="GO" id="GO:0000976">
    <property type="term" value="F:transcription cis-regulatory region binding"/>
    <property type="evidence" value="ECO:0000353"/>
    <property type="project" value="TAIR"/>
</dbReference>
<dbReference type="GO" id="GO:0030154">
    <property type="term" value="P:cell differentiation"/>
    <property type="evidence" value="ECO:0000315"/>
    <property type="project" value="TAIR"/>
</dbReference>
<dbReference type="GO" id="GO:0051301">
    <property type="term" value="P:cell division"/>
    <property type="evidence" value="ECO:0000315"/>
    <property type="project" value="TAIR"/>
</dbReference>
<dbReference type="GO" id="GO:0006355">
    <property type="term" value="P:regulation of DNA-templated transcription"/>
    <property type="evidence" value="ECO:0000304"/>
    <property type="project" value="TAIR"/>
</dbReference>
<dbReference type="GO" id="GO:0048768">
    <property type="term" value="P:root hair cell tip growth"/>
    <property type="evidence" value="ECO:0000315"/>
    <property type="project" value="TAIR"/>
</dbReference>
<dbReference type="InterPro" id="IPR005202">
    <property type="entry name" value="TF_GRAS"/>
</dbReference>
<dbReference type="PANTHER" id="PTHR31636">
    <property type="entry name" value="OSJNBA0084A10.13 PROTEIN-RELATED"/>
    <property type="match status" value="1"/>
</dbReference>
<dbReference type="Pfam" id="PF03514">
    <property type="entry name" value="GRAS"/>
    <property type="match status" value="1"/>
</dbReference>
<dbReference type="PROSITE" id="PS50985">
    <property type="entry name" value="GRAS"/>
    <property type="match status" value="1"/>
</dbReference>
<evidence type="ECO:0000250" key="1"/>
<evidence type="ECO:0000255" key="2">
    <source>
        <dbReference type="PROSITE-ProRule" id="PRU01191"/>
    </source>
</evidence>
<evidence type="ECO:0000256" key="3">
    <source>
        <dbReference type="SAM" id="MobiDB-lite"/>
    </source>
</evidence>
<evidence type="ECO:0000269" key="4">
    <source>
    </source>
</evidence>
<evidence type="ECO:0000305" key="5"/>
<reference key="1">
    <citation type="journal article" date="1999" name="Nature">
        <title>Sequence and analysis of chromosome 2 of the plant Arabidopsis thaliana.</title>
        <authorList>
            <person name="Lin X."/>
            <person name="Kaul S."/>
            <person name="Rounsley S.D."/>
            <person name="Shea T.P."/>
            <person name="Benito M.-I."/>
            <person name="Town C.D."/>
            <person name="Fujii C.Y."/>
            <person name="Mason T.M."/>
            <person name="Bowman C.L."/>
            <person name="Barnstead M.E."/>
            <person name="Feldblyum T.V."/>
            <person name="Buell C.R."/>
            <person name="Ketchum K.A."/>
            <person name="Lee J.J."/>
            <person name="Ronning C.M."/>
            <person name="Koo H.L."/>
            <person name="Moffat K.S."/>
            <person name="Cronin L.A."/>
            <person name="Shen M."/>
            <person name="Pai G."/>
            <person name="Van Aken S."/>
            <person name="Umayam L."/>
            <person name="Tallon L.J."/>
            <person name="Gill J.E."/>
            <person name="Adams M.D."/>
            <person name="Carrera A.J."/>
            <person name="Creasy T.H."/>
            <person name="Goodman H.M."/>
            <person name="Somerville C.R."/>
            <person name="Copenhaver G.P."/>
            <person name="Preuss D."/>
            <person name="Nierman W.C."/>
            <person name="White O."/>
            <person name="Eisen J.A."/>
            <person name="Salzberg S.L."/>
            <person name="Fraser C.M."/>
            <person name="Venter J.C."/>
        </authorList>
    </citation>
    <scope>NUCLEOTIDE SEQUENCE [LARGE SCALE GENOMIC DNA]</scope>
    <source>
        <strain>cv. Columbia</strain>
    </source>
</reference>
<reference key="2">
    <citation type="journal article" date="2017" name="Plant J.">
        <title>Araport11: a complete reannotation of the Arabidopsis thaliana reference genome.</title>
        <authorList>
            <person name="Cheng C.Y."/>
            <person name="Krishnakumar V."/>
            <person name="Chan A.P."/>
            <person name="Thibaud-Nissen F."/>
            <person name="Schobel S."/>
            <person name="Town C.D."/>
        </authorList>
    </citation>
    <scope>GENOME REANNOTATION</scope>
    <source>
        <strain>cv. Columbia</strain>
    </source>
</reference>
<reference key="3">
    <citation type="journal article" date="2003" name="Science">
        <title>Empirical analysis of transcriptional activity in the Arabidopsis genome.</title>
        <authorList>
            <person name="Yamada K."/>
            <person name="Lim J."/>
            <person name="Dale J.M."/>
            <person name="Chen H."/>
            <person name="Shinn P."/>
            <person name="Palm C.J."/>
            <person name="Southwick A.M."/>
            <person name="Wu H.C."/>
            <person name="Kim C.J."/>
            <person name="Nguyen M."/>
            <person name="Pham P.K."/>
            <person name="Cheuk R.F."/>
            <person name="Karlin-Newmann G."/>
            <person name="Liu S.X."/>
            <person name="Lam B."/>
            <person name="Sakano H."/>
            <person name="Wu T."/>
            <person name="Yu G."/>
            <person name="Miranda M."/>
            <person name="Quach H.L."/>
            <person name="Tripp M."/>
            <person name="Chang C.H."/>
            <person name="Lee J.M."/>
            <person name="Toriumi M.J."/>
            <person name="Chan M.M."/>
            <person name="Tang C.C."/>
            <person name="Onodera C.S."/>
            <person name="Deng J.M."/>
            <person name="Akiyama K."/>
            <person name="Ansari Y."/>
            <person name="Arakawa T."/>
            <person name="Banh J."/>
            <person name="Banno F."/>
            <person name="Bowser L."/>
            <person name="Brooks S.Y."/>
            <person name="Carninci P."/>
            <person name="Chao Q."/>
            <person name="Choy N."/>
            <person name="Enju A."/>
            <person name="Goldsmith A.D."/>
            <person name="Gurjal M."/>
            <person name="Hansen N.F."/>
            <person name="Hayashizaki Y."/>
            <person name="Johnson-Hopson C."/>
            <person name="Hsuan V.W."/>
            <person name="Iida K."/>
            <person name="Karnes M."/>
            <person name="Khan S."/>
            <person name="Koesema E."/>
            <person name="Ishida J."/>
            <person name="Jiang P.X."/>
            <person name="Jones T."/>
            <person name="Kawai J."/>
            <person name="Kamiya A."/>
            <person name="Meyers C."/>
            <person name="Nakajima M."/>
            <person name="Narusaka M."/>
            <person name="Seki M."/>
            <person name="Sakurai T."/>
            <person name="Satou M."/>
            <person name="Tamse R."/>
            <person name="Vaysberg M."/>
            <person name="Wallender E.K."/>
            <person name="Wong C."/>
            <person name="Yamamura Y."/>
            <person name="Yuan S."/>
            <person name="Shinozaki K."/>
            <person name="Davis R.W."/>
            <person name="Theologis A."/>
            <person name="Ecker J.R."/>
        </authorList>
    </citation>
    <scope>NUCLEOTIDE SEQUENCE [LARGE SCALE MRNA]</scope>
    <source>
        <strain>cv. Columbia</strain>
    </source>
</reference>
<reference key="4">
    <citation type="submission" date="2005-02" db="EMBL/GenBank/DDBJ databases">
        <title>Arabidopsis ORF clones.</title>
        <authorList>
            <person name="Cheuk R.F."/>
            <person name="Chen H."/>
            <person name="Kim C.J."/>
            <person name="Shinn P."/>
            <person name="Ecker J.R."/>
        </authorList>
    </citation>
    <scope>NUCLEOTIDE SEQUENCE [LARGE SCALE MRNA]</scope>
    <source>
        <strain>cv. Columbia</strain>
    </source>
</reference>
<reference key="5">
    <citation type="journal article" date="2004" name="Plant Mol. Biol.">
        <title>Genome-wide analysis of the GRAS gene family in rice and Arabidopsis.</title>
        <authorList>
            <person name="Tian C."/>
            <person name="Wan P."/>
            <person name="Sun S."/>
            <person name="Li J."/>
            <person name="Chen M."/>
        </authorList>
    </citation>
    <scope>GENE FAMILY</scope>
</reference>
<reference key="6">
    <citation type="journal article" date="2008" name="Plant Mol. Biol.">
        <title>Large-scale analysis of the GRAS gene family in Arabidopsis thaliana.</title>
        <authorList>
            <person name="Lee M.-H."/>
            <person name="Kim B."/>
            <person name="Song S.-K."/>
            <person name="Heo J.-O."/>
            <person name="Yu N.-I."/>
            <person name="Lee S.A."/>
            <person name="Kim M."/>
            <person name="Kim D.G."/>
            <person name="Sohn S.O."/>
            <person name="Lim C.E."/>
            <person name="Chang K.S."/>
            <person name="Lee M.M."/>
            <person name="Lim J."/>
        </authorList>
    </citation>
    <scope>GENE FAMILY</scope>
    <scope>SUBCELLULAR LOCATION</scope>
    <scope>TISSUE SPECIFICITY</scope>
</reference>
<organism>
    <name type="scientific">Arabidopsis thaliana</name>
    <name type="common">Mouse-ear cress</name>
    <dbReference type="NCBI Taxonomy" id="3702"/>
    <lineage>
        <taxon>Eukaryota</taxon>
        <taxon>Viridiplantae</taxon>
        <taxon>Streptophyta</taxon>
        <taxon>Embryophyta</taxon>
        <taxon>Tracheophyta</taxon>
        <taxon>Spermatophyta</taxon>
        <taxon>Magnoliopsida</taxon>
        <taxon>eudicotyledons</taxon>
        <taxon>Gunneridae</taxon>
        <taxon>Pentapetalae</taxon>
        <taxon>rosids</taxon>
        <taxon>malvids</taxon>
        <taxon>Brassicales</taxon>
        <taxon>Brassicaceae</taxon>
        <taxon>Camelineae</taxon>
        <taxon>Arabidopsis</taxon>
    </lineage>
</organism>
<gene>
    <name type="primary">SCL27</name>
    <name type="ordered locus">At2g45160</name>
    <name type="ORF">T14P1.3</name>
</gene>
<protein>
    <recommendedName>
        <fullName>Scarecrow-like protein 27</fullName>
        <shortName>AtSCL27</shortName>
    </recommendedName>
    <alternativeName>
        <fullName>GRAS family protein 14</fullName>
        <shortName>AtGRAS-14</shortName>
    </alternativeName>
</protein>
<proteinExistence type="evidence at transcript level"/>
<feature type="chain" id="PRO_0000350864" description="Scarecrow-like protein 27">
    <location>
        <begin position="1"/>
        <end position="640"/>
    </location>
</feature>
<feature type="domain" description="GRAS" evidence="2">
    <location>
        <begin position="259"/>
        <end position="639"/>
    </location>
</feature>
<feature type="region of interest" description="Disordered" evidence="3">
    <location>
        <begin position="68"/>
        <end position="98"/>
    </location>
</feature>
<feature type="region of interest" description="Leucine repeat I (LRI)" evidence="2">
    <location>
        <begin position="266"/>
        <end position="331"/>
    </location>
</feature>
<feature type="region of interest" description="VHIID" evidence="2">
    <location>
        <begin position="350"/>
        <end position="422"/>
    </location>
</feature>
<feature type="region of interest" description="Leucine repeat II (LRII)" evidence="2">
    <location>
        <begin position="438"/>
        <end position="470"/>
    </location>
</feature>
<feature type="region of interest" description="PFYRE" evidence="2">
    <location>
        <begin position="480"/>
        <end position="565"/>
    </location>
</feature>
<feature type="region of interest" description="SAW" evidence="2">
    <location>
        <begin position="568"/>
        <end position="639"/>
    </location>
</feature>
<feature type="short sequence motif" description="VHIID" evidence="2">
    <location>
        <begin position="383"/>
        <end position="387"/>
    </location>
</feature>
<feature type="compositionally biased region" description="Low complexity" evidence="3">
    <location>
        <begin position="68"/>
        <end position="79"/>
    </location>
</feature>
<feature type="compositionally biased region" description="Low complexity" evidence="3">
    <location>
        <begin position="86"/>
        <end position="98"/>
    </location>
</feature>
<feature type="sequence conflict" description="In Ref. 3; AAO42084." evidence="5" ref="3">
    <original>H</original>
    <variation>Q</variation>
    <location>
        <position position="289"/>
    </location>
</feature>